<protein>
    <recommendedName>
        <fullName evidence="1">Ribosome rescue factor SmrB</fullName>
        <ecNumber evidence="1">3.1.-.-</ecNumber>
    </recommendedName>
</protein>
<dbReference type="EC" id="3.1.-.-" evidence="1"/>
<dbReference type="EMBL" id="L42023">
    <property type="protein sequence ID" value="AAC22856.1"/>
    <property type="molecule type" value="Genomic_DNA"/>
</dbReference>
<dbReference type="PIR" id="I64021">
    <property type="entry name" value="I64021"/>
</dbReference>
<dbReference type="RefSeq" id="NP_439358.2">
    <property type="nucleotide sequence ID" value="NC_000907.1"/>
</dbReference>
<dbReference type="SMR" id="P44126"/>
<dbReference type="STRING" id="71421.HI_1202"/>
<dbReference type="DNASU" id="950140"/>
<dbReference type="EnsemblBacteria" id="AAC22856">
    <property type="protein sequence ID" value="AAC22856"/>
    <property type="gene ID" value="HI_1202"/>
</dbReference>
<dbReference type="KEGG" id="hin:HI_1202"/>
<dbReference type="PATRIC" id="fig|71421.8.peg.1254"/>
<dbReference type="eggNOG" id="COG2840">
    <property type="taxonomic scope" value="Bacteria"/>
</dbReference>
<dbReference type="HOGENOM" id="CLU_055978_4_0_6"/>
<dbReference type="OrthoDB" id="5795446at2"/>
<dbReference type="PhylomeDB" id="P44126"/>
<dbReference type="Proteomes" id="UP000000579">
    <property type="component" value="Chromosome"/>
</dbReference>
<dbReference type="GO" id="GO:0004521">
    <property type="term" value="F:RNA endonuclease activity"/>
    <property type="evidence" value="ECO:0007669"/>
    <property type="project" value="UniProtKB-UniRule"/>
</dbReference>
<dbReference type="GO" id="GO:0019843">
    <property type="term" value="F:rRNA binding"/>
    <property type="evidence" value="ECO:0007669"/>
    <property type="project" value="UniProtKB-UniRule"/>
</dbReference>
<dbReference type="GO" id="GO:0072344">
    <property type="term" value="P:rescue of stalled ribosome"/>
    <property type="evidence" value="ECO:0007669"/>
    <property type="project" value="UniProtKB-UniRule"/>
</dbReference>
<dbReference type="Gene3D" id="3.30.1370.110">
    <property type="match status" value="1"/>
</dbReference>
<dbReference type="HAMAP" id="MF_01042">
    <property type="entry name" value="SmrB"/>
    <property type="match status" value="1"/>
</dbReference>
<dbReference type="InterPro" id="IPR002625">
    <property type="entry name" value="Smr_dom"/>
</dbReference>
<dbReference type="InterPro" id="IPR036063">
    <property type="entry name" value="Smr_dom_sf"/>
</dbReference>
<dbReference type="InterPro" id="IPR022990">
    <property type="entry name" value="SmrB-like"/>
</dbReference>
<dbReference type="NCBIfam" id="NF003432">
    <property type="entry name" value="PRK04946.1"/>
    <property type="match status" value="1"/>
</dbReference>
<dbReference type="PANTHER" id="PTHR35562">
    <property type="entry name" value="DNA ENDONUCLEASE SMRA-RELATED"/>
    <property type="match status" value="1"/>
</dbReference>
<dbReference type="PANTHER" id="PTHR35562:SF1">
    <property type="entry name" value="UPF0115 PROTEIN YFCN"/>
    <property type="match status" value="1"/>
</dbReference>
<dbReference type="Pfam" id="PF01713">
    <property type="entry name" value="Smr"/>
    <property type="match status" value="1"/>
</dbReference>
<dbReference type="SMART" id="SM00463">
    <property type="entry name" value="SMR"/>
    <property type="match status" value="1"/>
</dbReference>
<dbReference type="SUPFAM" id="SSF160443">
    <property type="entry name" value="SMR domain-like"/>
    <property type="match status" value="1"/>
</dbReference>
<dbReference type="PROSITE" id="PS50828">
    <property type="entry name" value="SMR"/>
    <property type="match status" value="1"/>
</dbReference>
<organism>
    <name type="scientific">Haemophilus influenzae (strain ATCC 51907 / DSM 11121 / KW20 / Rd)</name>
    <dbReference type="NCBI Taxonomy" id="71421"/>
    <lineage>
        <taxon>Bacteria</taxon>
        <taxon>Pseudomonadati</taxon>
        <taxon>Pseudomonadota</taxon>
        <taxon>Gammaproteobacteria</taxon>
        <taxon>Pasteurellales</taxon>
        <taxon>Pasteurellaceae</taxon>
        <taxon>Haemophilus</taxon>
    </lineage>
</organism>
<evidence type="ECO:0000255" key="1">
    <source>
        <dbReference type="HAMAP-Rule" id="MF_01042"/>
    </source>
</evidence>
<proteinExistence type="inferred from homology"/>
<feature type="chain" id="PRO_0000214555" description="Ribosome rescue factor SmrB">
    <location>
        <begin position="1"/>
        <end position="167"/>
    </location>
</feature>
<feature type="domain" description="Smr" evidence="1">
    <location>
        <begin position="91"/>
        <end position="166"/>
    </location>
</feature>
<sequence>MQDEFDLFRTETKGIKPIKQDTFVAPRQKRDQKKIELKELRAKEDTLFYFSDEYEPLLNDNDGVVKYLRDGEDSHLLKQLRRGDFSPELFLDLHGLTREQAKQELAALLLACENEHVDCASIMTGYGTFTLKKQIPRWLVQHPKVRALHQAPREWGGEAAILILVDL</sequence>
<gene>
    <name evidence="1" type="primary">smrB</name>
    <name type="ordered locus">HI_1202</name>
</gene>
<keyword id="KW-0255">Endonuclease</keyword>
<keyword id="KW-0378">Hydrolase</keyword>
<keyword id="KW-0540">Nuclease</keyword>
<keyword id="KW-1185">Reference proteome</keyword>
<keyword id="KW-0694">RNA-binding</keyword>
<keyword id="KW-0699">rRNA-binding</keyword>
<reference key="1">
    <citation type="journal article" date="1995" name="Science">
        <title>Whole-genome random sequencing and assembly of Haemophilus influenzae Rd.</title>
        <authorList>
            <person name="Fleischmann R.D."/>
            <person name="Adams M.D."/>
            <person name="White O."/>
            <person name="Clayton R.A."/>
            <person name="Kirkness E.F."/>
            <person name="Kerlavage A.R."/>
            <person name="Bult C.J."/>
            <person name="Tomb J.-F."/>
            <person name="Dougherty B.A."/>
            <person name="Merrick J.M."/>
            <person name="McKenney K."/>
            <person name="Sutton G.G."/>
            <person name="FitzHugh W."/>
            <person name="Fields C.A."/>
            <person name="Gocayne J.D."/>
            <person name="Scott J.D."/>
            <person name="Shirley R."/>
            <person name="Liu L.-I."/>
            <person name="Glodek A."/>
            <person name="Kelley J.M."/>
            <person name="Weidman J.F."/>
            <person name="Phillips C.A."/>
            <person name="Spriggs T."/>
            <person name="Hedblom E."/>
            <person name="Cotton M.D."/>
            <person name="Utterback T.R."/>
            <person name="Hanna M.C."/>
            <person name="Nguyen D.T."/>
            <person name="Saudek D.M."/>
            <person name="Brandon R.C."/>
            <person name="Fine L.D."/>
            <person name="Fritchman J.L."/>
            <person name="Fuhrmann J.L."/>
            <person name="Geoghagen N.S.M."/>
            <person name="Gnehm C.L."/>
            <person name="McDonald L.A."/>
            <person name="Small K.V."/>
            <person name="Fraser C.M."/>
            <person name="Smith H.O."/>
            <person name="Venter J.C."/>
        </authorList>
    </citation>
    <scope>NUCLEOTIDE SEQUENCE [LARGE SCALE GENOMIC DNA]</scope>
    <source>
        <strain>ATCC 51907 / DSM 11121 / KW20 / Rd</strain>
    </source>
</reference>
<name>SMRB_HAEIN</name>
<accession>P44126</accession>
<comment type="function">
    <text evidence="1">Acts as a ribosome collision sensor. Detects stalled/collided disomes (pairs of ribosomes where the leading ribosome is stalled and a second ribosome has collided with it) and endonucleolytically cleaves mRNA at the 5' boundary of the stalled ribosome. Stalled/collided disomes form a new interface (primarily via the 30S subunits) that binds SmrB. Cleaved mRNA becomes available for tmRNA ligation, leading to ribosomal subunit dissociation and rescue of stalled ribosomes.</text>
</comment>
<comment type="subunit">
    <text evidence="1">Associates with collided ribosomes, but not with correctly translating polysomes.</text>
</comment>
<comment type="similarity">
    <text evidence="1">Belongs to the SmrB family.</text>
</comment>